<reference key="1">
    <citation type="journal article" date="2004" name="Nat. Genet.">
        <title>Comparison of genome degradation in Paratyphi A and Typhi, human-restricted serovars of Salmonella enterica that cause typhoid.</title>
        <authorList>
            <person name="McClelland M."/>
            <person name="Sanderson K.E."/>
            <person name="Clifton S.W."/>
            <person name="Latreille P."/>
            <person name="Porwollik S."/>
            <person name="Sabo A."/>
            <person name="Meyer R."/>
            <person name="Bieri T."/>
            <person name="Ozersky P."/>
            <person name="McLellan M."/>
            <person name="Harkins C.R."/>
            <person name="Wang C."/>
            <person name="Nguyen C."/>
            <person name="Berghoff A."/>
            <person name="Elliott G."/>
            <person name="Kohlberg S."/>
            <person name="Strong C."/>
            <person name="Du F."/>
            <person name="Carter J."/>
            <person name="Kremizki C."/>
            <person name="Layman D."/>
            <person name="Leonard S."/>
            <person name="Sun H."/>
            <person name="Fulton L."/>
            <person name="Nash W."/>
            <person name="Miner T."/>
            <person name="Minx P."/>
            <person name="Delehaunty K."/>
            <person name="Fronick C."/>
            <person name="Magrini V."/>
            <person name="Nhan M."/>
            <person name="Warren W."/>
            <person name="Florea L."/>
            <person name="Spieth J."/>
            <person name="Wilson R.K."/>
        </authorList>
    </citation>
    <scope>NUCLEOTIDE SEQUENCE [LARGE SCALE GENOMIC DNA]</scope>
    <source>
        <strain>ATCC 9150 / SARB42</strain>
    </source>
</reference>
<proteinExistence type="inferred from homology"/>
<accession>Q5PII3</accession>
<comment type="function">
    <text evidence="1">Catalyzes the reversible interconversion of serine and glycine with tetrahydrofolate (THF) serving as the one-carbon carrier. This reaction serves as the major source of one-carbon groups required for the biosynthesis of purines, thymidylate, methionine, and other important biomolecules. Also exhibits THF-independent aldolase activity toward beta-hydroxyamino acids, producing glycine and aldehydes, via a retro-aldol mechanism.</text>
</comment>
<comment type="catalytic activity">
    <reaction evidence="1">
        <text>(6R)-5,10-methylene-5,6,7,8-tetrahydrofolate + glycine + H2O = (6S)-5,6,7,8-tetrahydrofolate + L-serine</text>
        <dbReference type="Rhea" id="RHEA:15481"/>
        <dbReference type="ChEBI" id="CHEBI:15377"/>
        <dbReference type="ChEBI" id="CHEBI:15636"/>
        <dbReference type="ChEBI" id="CHEBI:33384"/>
        <dbReference type="ChEBI" id="CHEBI:57305"/>
        <dbReference type="ChEBI" id="CHEBI:57453"/>
        <dbReference type="EC" id="2.1.2.1"/>
    </reaction>
</comment>
<comment type="cofactor">
    <cofactor evidence="1">
        <name>pyridoxal 5'-phosphate</name>
        <dbReference type="ChEBI" id="CHEBI:597326"/>
    </cofactor>
</comment>
<comment type="pathway">
    <text evidence="1">One-carbon metabolism; tetrahydrofolate interconversion.</text>
</comment>
<comment type="pathway">
    <text evidence="1">Amino-acid biosynthesis; glycine biosynthesis; glycine from L-serine: step 1/1.</text>
</comment>
<comment type="subunit">
    <text evidence="1">Homodimer.</text>
</comment>
<comment type="subcellular location">
    <subcellularLocation>
        <location evidence="1">Cytoplasm</location>
    </subcellularLocation>
</comment>
<comment type="similarity">
    <text evidence="1">Belongs to the SHMT family.</text>
</comment>
<evidence type="ECO:0000255" key="1">
    <source>
        <dbReference type="HAMAP-Rule" id="MF_00051"/>
    </source>
</evidence>
<dbReference type="EC" id="2.1.2.1" evidence="1"/>
<dbReference type="EMBL" id="CP000026">
    <property type="protein sequence ID" value="AAV76330.1"/>
    <property type="molecule type" value="Genomic_DNA"/>
</dbReference>
<dbReference type="RefSeq" id="WP_000919178.1">
    <property type="nucleotide sequence ID" value="NC_006511.1"/>
</dbReference>
<dbReference type="SMR" id="Q5PII3"/>
<dbReference type="KEGG" id="spt:SPA0311"/>
<dbReference type="HOGENOM" id="CLU_022477_2_1_6"/>
<dbReference type="UniPathway" id="UPA00193"/>
<dbReference type="UniPathway" id="UPA00288">
    <property type="reaction ID" value="UER01023"/>
</dbReference>
<dbReference type="Proteomes" id="UP000008185">
    <property type="component" value="Chromosome"/>
</dbReference>
<dbReference type="GO" id="GO:0005829">
    <property type="term" value="C:cytosol"/>
    <property type="evidence" value="ECO:0007669"/>
    <property type="project" value="TreeGrafter"/>
</dbReference>
<dbReference type="GO" id="GO:0004372">
    <property type="term" value="F:glycine hydroxymethyltransferase activity"/>
    <property type="evidence" value="ECO:0007669"/>
    <property type="project" value="UniProtKB-UniRule"/>
</dbReference>
<dbReference type="GO" id="GO:0030170">
    <property type="term" value="F:pyridoxal phosphate binding"/>
    <property type="evidence" value="ECO:0007669"/>
    <property type="project" value="UniProtKB-UniRule"/>
</dbReference>
<dbReference type="GO" id="GO:0019264">
    <property type="term" value="P:glycine biosynthetic process from serine"/>
    <property type="evidence" value="ECO:0007669"/>
    <property type="project" value="UniProtKB-UniRule"/>
</dbReference>
<dbReference type="GO" id="GO:0035999">
    <property type="term" value="P:tetrahydrofolate interconversion"/>
    <property type="evidence" value="ECO:0007669"/>
    <property type="project" value="UniProtKB-UniRule"/>
</dbReference>
<dbReference type="CDD" id="cd00378">
    <property type="entry name" value="SHMT"/>
    <property type="match status" value="1"/>
</dbReference>
<dbReference type="FunFam" id="3.40.640.10:FF:000001">
    <property type="entry name" value="Serine hydroxymethyltransferase"/>
    <property type="match status" value="1"/>
</dbReference>
<dbReference type="FunFam" id="3.90.1150.10:FF:000003">
    <property type="entry name" value="Serine hydroxymethyltransferase"/>
    <property type="match status" value="1"/>
</dbReference>
<dbReference type="Gene3D" id="3.90.1150.10">
    <property type="entry name" value="Aspartate Aminotransferase, domain 1"/>
    <property type="match status" value="1"/>
</dbReference>
<dbReference type="Gene3D" id="3.40.640.10">
    <property type="entry name" value="Type I PLP-dependent aspartate aminotransferase-like (Major domain)"/>
    <property type="match status" value="1"/>
</dbReference>
<dbReference type="HAMAP" id="MF_00051">
    <property type="entry name" value="SHMT"/>
    <property type="match status" value="1"/>
</dbReference>
<dbReference type="InterPro" id="IPR015424">
    <property type="entry name" value="PyrdxlP-dep_Trfase"/>
</dbReference>
<dbReference type="InterPro" id="IPR015421">
    <property type="entry name" value="PyrdxlP-dep_Trfase_major"/>
</dbReference>
<dbReference type="InterPro" id="IPR015422">
    <property type="entry name" value="PyrdxlP-dep_Trfase_small"/>
</dbReference>
<dbReference type="InterPro" id="IPR001085">
    <property type="entry name" value="Ser_HO-MeTrfase"/>
</dbReference>
<dbReference type="InterPro" id="IPR049943">
    <property type="entry name" value="Ser_HO-MeTrfase-like"/>
</dbReference>
<dbReference type="InterPro" id="IPR019798">
    <property type="entry name" value="Ser_HO-MeTrfase_PLP_BS"/>
</dbReference>
<dbReference type="InterPro" id="IPR039429">
    <property type="entry name" value="SHMT-like_dom"/>
</dbReference>
<dbReference type="NCBIfam" id="NF000586">
    <property type="entry name" value="PRK00011.1"/>
    <property type="match status" value="1"/>
</dbReference>
<dbReference type="PANTHER" id="PTHR11680">
    <property type="entry name" value="SERINE HYDROXYMETHYLTRANSFERASE"/>
    <property type="match status" value="1"/>
</dbReference>
<dbReference type="PANTHER" id="PTHR11680:SF50">
    <property type="entry name" value="SERINE HYDROXYMETHYLTRANSFERASE"/>
    <property type="match status" value="1"/>
</dbReference>
<dbReference type="Pfam" id="PF00464">
    <property type="entry name" value="SHMT"/>
    <property type="match status" value="1"/>
</dbReference>
<dbReference type="PIRSF" id="PIRSF000412">
    <property type="entry name" value="SHMT"/>
    <property type="match status" value="1"/>
</dbReference>
<dbReference type="SUPFAM" id="SSF53383">
    <property type="entry name" value="PLP-dependent transferases"/>
    <property type="match status" value="1"/>
</dbReference>
<dbReference type="PROSITE" id="PS00096">
    <property type="entry name" value="SHMT"/>
    <property type="match status" value="1"/>
</dbReference>
<feature type="chain" id="PRO_0000235020" description="Serine hydroxymethyltransferase">
    <location>
        <begin position="1"/>
        <end position="417"/>
    </location>
</feature>
<feature type="binding site" evidence="1">
    <location>
        <position position="121"/>
    </location>
    <ligand>
        <name>(6S)-5,6,7,8-tetrahydrofolate</name>
        <dbReference type="ChEBI" id="CHEBI:57453"/>
    </ligand>
</feature>
<feature type="binding site" evidence="1">
    <location>
        <begin position="125"/>
        <end position="127"/>
    </location>
    <ligand>
        <name>(6S)-5,6,7,8-tetrahydrofolate</name>
        <dbReference type="ChEBI" id="CHEBI:57453"/>
    </ligand>
</feature>
<feature type="binding site" evidence="1">
    <location>
        <begin position="355"/>
        <end position="357"/>
    </location>
    <ligand>
        <name>(6S)-5,6,7,8-tetrahydrofolate</name>
        <dbReference type="ChEBI" id="CHEBI:57453"/>
    </ligand>
</feature>
<feature type="site" description="Plays an important role in substrate specificity" evidence="1">
    <location>
        <position position="228"/>
    </location>
</feature>
<feature type="modified residue" description="N6-(pyridoxal phosphate)lysine" evidence="1">
    <location>
        <position position="229"/>
    </location>
</feature>
<organism>
    <name type="scientific">Salmonella paratyphi A (strain ATCC 9150 / SARB42)</name>
    <dbReference type="NCBI Taxonomy" id="295319"/>
    <lineage>
        <taxon>Bacteria</taxon>
        <taxon>Pseudomonadati</taxon>
        <taxon>Pseudomonadota</taxon>
        <taxon>Gammaproteobacteria</taxon>
        <taxon>Enterobacterales</taxon>
        <taxon>Enterobacteriaceae</taxon>
        <taxon>Salmonella</taxon>
    </lineage>
</organism>
<gene>
    <name evidence="1" type="primary">glyA</name>
    <name type="ordered locus">SPA0311</name>
</gene>
<sequence length="417" mass="45455">MLKREMNIADYDAELWQAMEQEKVRQEEHIELIASENYTSPRVMQAQGSQLTNKYAEGYPGKRYYGGCEYVDVVEQLAIDRAKELFGADYANVQPHSGSQANFAVYTALLQPGDTVLGMNLAQGGHLTHGSPVNFSGKLYNIVPYGIDESGKIDYDEMAKLAKEHKPKMIIGGFSAYSGVVDWAKMREIADSIGAYLFVDMAHVAGLIAAGVYPNPVPHAHVVTTTTHKTLAGPRGGLILAKGGDEELYKKLNSAVFPSAQGGPLMHVIAGKAVALKEAMEPEFKVYQQQVAKNAKAMVEVFLNRGYKVVSGGTENHLFLLDLVDKNLTGKEADAALGRANITVNKNSVPNDPKSPFVTSGIRIGSPAVTRRGFKEAEVKELAGWMCDVLDNINDEATIERVKAKVLDICARFPVYA</sequence>
<keyword id="KW-0028">Amino-acid biosynthesis</keyword>
<keyword id="KW-0963">Cytoplasm</keyword>
<keyword id="KW-0554">One-carbon metabolism</keyword>
<keyword id="KW-0663">Pyridoxal phosphate</keyword>
<keyword id="KW-0808">Transferase</keyword>
<name>GLYA_SALPA</name>
<protein>
    <recommendedName>
        <fullName evidence="1">Serine hydroxymethyltransferase</fullName>
        <shortName evidence="1">SHMT</shortName>
        <shortName evidence="1">Serine methylase</shortName>
        <ecNumber evidence="1">2.1.2.1</ecNumber>
    </recommendedName>
</protein>